<protein>
    <recommendedName>
        <fullName>CTD small phosphatase-like protein 2</fullName>
        <shortName>CTDSP-like 2</shortName>
        <ecNumber>3.1.3.-</ecNumber>
    </recommendedName>
</protein>
<name>CTSL2_HUMAN</name>
<keyword id="KW-0007">Acetylation</keyword>
<keyword id="KW-0025">Alternative splicing</keyword>
<keyword id="KW-0378">Hydrolase</keyword>
<keyword id="KW-0597">Phosphoprotein</keyword>
<keyword id="KW-0904">Protein phosphatase</keyword>
<keyword id="KW-1267">Proteomics identification</keyword>
<keyword id="KW-1185">Reference proteome</keyword>
<organism>
    <name type="scientific">Homo sapiens</name>
    <name type="common">Human</name>
    <dbReference type="NCBI Taxonomy" id="9606"/>
    <lineage>
        <taxon>Eukaryota</taxon>
        <taxon>Metazoa</taxon>
        <taxon>Chordata</taxon>
        <taxon>Craniata</taxon>
        <taxon>Vertebrata</taxon>
        <taxon>Euteleostomi</taxon>
        <taxon>Mammalia</taxon>
        <taxon>Eutheria</taxon>
        <taxon>Euarchontoglires</taxon>
        <taxon>Primates</taxon>
        <taxon>Haplorrhini</taxon>
        <taxon>Catarrhini</taxon>
        <taxon>Hominidae</taxon>
        <taxon>Homo</taxon>
    </lineage>
</organism>
<comment type="function">
    <text evidence="1">Probable phosphatase.</text>
</comment>
<comment type="interaction">
    <interactant intactId="EBI-10039222">
        <id>Q05D32</id>
    </interactant>
    <interactant intactId="EBI-6423298">
        <id>Q8N165</id>
        <label>PDIK1L</label>
    </interactant>
    <organismsDiffer>false</organismsDiffer>
    <experiments>12</experiments>
</comment>
<comment type="alternative products">
    <event type="alternative splicing"/>
    <isoform>
        <id>Q05D32-1</id>
        <name>1</name>
        <sequence type="displayed"/>
    </isoform>
    <isoform>
        <id>Q05D32-2</id>
        <name>2</name>
        <sequence type="described" ref="VSP_033218"/>
    </isoform>
</comment>
<comment type="similarity">
    <text evidence="5">Belongs to the CTDSPL2 family.</text>
</comment>
<comment type="sequence caution" evidence="5">
    <conflict type="frameshift">
        <sequence resource="EMBL-CDS" id="AAF29030"/>
    </conflict>
</comment>
<comment type="sequence caution" evidence="5">
    <conflict type="miscellaneous discrepancy">
        <sequence resource="EMBL-CDS" id="AAH18623"/>
    </conflict>
    <text>Contaminating sequence. Potential poly-A sequence.</text>
</comment>
<comment type="sequence caution" evidence="5">
    <conflict type="erroneous initiation">
        <sequence resource="EMBL-CDS" id="BAA91664"/>
    </conflict>
</comment>
<dbReference type="EC" id="3.1.3.-"/>
<dbReference type="EMBL" id="AY364237">
    <property type="protein sequence ID" value="AAQ76796.1"/>
    <property type="molecule type" value="mRNA"/>
</dbReference>
<dbReference type="EMBL" id="DQ128104">
    <property type="protein sequence ID" value="AAZ42188.1"/>
    <property type="molecule type" value="mRNA"/>
</dbReference>
<dbReference type="EMBL" id="AF161543">
    <property type="protein sequence ID" value="AAF29030.1"/>
    <property type="status" value="ALT_FRAME"/>
    <property type="molecule type" value="mRNA"/>
</dbReference>
<dbReference type="EMBL" id="AF161478">
    <property type="protein sequence ID" value="AAF29093.1"/>
    <property type="molecule type" value="mRNA"/>
</dbReference>
<dbReference type="EMBL" id="AK001385">
    <property type="protein sequence ID" value="BAA91664.1"/>
    <property type="status" value="ALT_INIT"/>
    <property type="molecule type" value="mRNA"/>
</dbReference>
<dbReference type="EMBL" id="AK291230">
    <property type="protein sequence ID" value="BAF83919.1"/>
    <property type="molecule type" value="mRNA"/>
</dbReference>
<dbReference type="EMBL" id="CR627421">
    <property type="protein sequence ID" value="CAH10508.1"/>
    <property type="molecule type" value="mRNA"/>
</dbReference>
<dbReference type="EMBL" id="CH471082">
    <property type="protein sequence ID" value="EAW77265.1"/>
    <property type="molecule type" value="Genomic_DNA"/>
</dbReference>
<dbReference type="EMBL" id="BC018623">
    <property type="protein sequence ID" value="AAH18623.1"/>
    <property type="status" value="ALT_SEQ"/>
    <property type="molecule type" value="mRNA"/>
</dbReference>
<dbReference type="EMBL" id="BC035744">
    <property type="protein sequence ID" value="AAH35744.1"/>
    <property type="molecule type" value="mRNA"/>
</dbReference>
<dbReference type="CCDS" id="CCDS10110.1">
    <molecule id="Q05D32-1"/>
</dbReference>
<dbReference type="RefSeq" id="NP_057480.2">
    <molecule id="Q05D32-1"/>
    <property type="nucleotide sequence ID" value="NM_016396.3"/>
</dbReference>
<dbReference type="RefSeq" id="XP_005254498.1">
    <molecule id="Q05D32-1"/>
    <property type="nucleotide sequence ID" value="XM_005254441.3"/>
</dbReference>
<dbReference type="RefSeq" id="XP_006720628.1">
    <molecule id="Q05D32-1"/>
    <property type="nucleotide sequence ID" value="XM_006720565.3"/>
</dbReference>
<dbReference type="RefSeq" id="XP_054234142.1">
    <molecule id="Q05D32-1"/>
    <property type="nucleotide sequence ID" value="XM_054378167.1"/>
</dbReference>
<dbReference type="RefSeq" id="XP_054234143.1">
    <molecule id="Q05D32-1"/>
    <property type="nucleotide sequence ID" value="XM_054378168.1"/>
</dbReference>
<dbReference type="SMR" id="Q05D32"/>
<dbReference type="BioGRID" id="119571">
    <property type="interactions" value="71"/>
</dbReference>
<dbReference type="FunCoup" id="Q05D32">
    <property type="interactions" value="2801"/>
</dbReference>
<dbReference type="IntAct" id="Q05D32">
    <property type="interactions" value="30"/>
</dbReference>
<dbReference type="MINT" id="Q05D32"/>
<dbReference type="STRING" id="9606.ENSP00000260327"/>
<dbReference type="DEPOD" id="CTDSPL2"/>
<dbReference type="iPTMnet" id="Q05D32"/>
<dbReference type="PhosphoSitePlus" id="Q05D32"/>
<dbReference type="BioMuta" id="CTDSPL2"/>
<dbReference type="DMDM" id="187471086"/>
<dbReference type="jPOST" id="Q05D32"/>
<dbReference type="MassIVE" id="Q05D32"/>
<dbReference type="PaxDb" id="9606-ENSP00000260327"/>
<dbReference type="PeptideAtlas" id="Q05D32"/>
<dbReference type="ProteomicsDB" id="58398">
    <molecule id="Q05D32-1"/>
</dbReference>
<dbReference type="ProteomicsDB" id="58399">
    <molecule id="Q05D32-2"/>
</dbReference>
<dbReference type="Pumba" id="Q05D32"/>
<dbReference type="Antibodypedia" id="42444">
    <property type="antibodies" value="138 antibodies from 26 providers"/>
</dbReference>
<dbReference type="DNASU" id="51496"/>
<dbReference type="Ensembl" id="ENST00000260327.9">
    <molecule id="Q05D32-1"/>
    <property type="protein sequence ID" value="ENSP00000260327.4"/>
    <property type="gene ID" value="ENSG00000137770.14"/>
</dbReference>
<dbReference type="Ensembl" id="ENST00000558373.5">
    <molecule id="Q05D32-2"/>
    <property type="protein sequence ID" value="ENSP00000453051.1"/>
    <property type="gene ID" value="ENSG00000137770.14"/>
</dbReference>
<dbReference type="Ensembl" id="ENST00000558966.5">
    <molecule id="Q05D32-1"/>
    <property type="protein sequence ID" value="ENSP00000452837.1"/>
    <property type="gene ID" value="ENSG00000137770.14"/>
</dbReference>
<dbReference type="GeneID" id="51496"/>
<dbReference type="KEGG" id="hsa:51496"/>
<dbReference type="MANE-Select" id="ENST00000260327.9">
    <property type="protein sequence ID" value="ENSP00000260327.4"/>
    <property type="RefSeq nucleotide sequence ID" value="NM_016396.3"/>
    <property type="RefSeq protein sequence ID" value="NP_057480.2"/>
</dbReference>
<dbReference type="UCSC" id="uc001ztr.4">
    <molecule id="Q05D32-1"/>
    <property type="organism name" value="human"/>
</dbReference>
<dbReference type="AGR" id="HGNC:26936"/>
<dbReference type="CTD" id="51496"/>
<dbReference type="DisGeNET" id="51496"/>
<dbReference type="GeneCards" id="CTDSPL2"/>
<dbReference type="HGNC" id="HGNC:26936">
    <property type="gene designation" value="CTDSPL2"/>
</dbReference>
<dbReference type="HPA" id="ENSG00000137770">
    <property type="expression patterns" value="Low tissue specificity"/>
</dbReference>
<dbReference type="MIM" id="618739">
    <property type="type" value="gene"/>
</dbReference>
<dbReference type="neXtProt" id="NX_Q05D32"/>
<dbReference type="OpenTargets" id="ENSG00000137770"/>
<dbReference type="PharmGKB" id="PA142672063"/>
<dbReference type="VEuPathDB" id="HostDB:ENSG00000137770"/>
<dbReference type="eggNOG" id="KOG1605">
    <property type="taxonomic scope" value="Eukaryota"/>
</dbReference>
<dbReference type="GeneTree" id="ENSGT01040000240503"/>
<dbReference type="HOGENOM" id="CLU_034042_4_0_1"/>
<dbReference type="InParanoid" id="Q05D32"/>
<dbReference type="OMA" id="NQAIQVR"/>
<dbReference type="OrthoDB" id="277011at2759"/>
<dbReference type="PAN-GO" id="Q05D32">
    <property type="GO annotations" value="1 GO annotation based on evolutionary models"/>
</dbReference>
<dbReference type="PhylomeDB" id="Q05D32"/>
<dbReference type="TreeFam" id="TF354278"/>
<dbReference type="PathwayCommons" id="Q05D32"/>
<dbReference type="SignaLink" id="Q05D32"/>
<dbReference type="SIGNOR" id="Q05D32"/>
<dbReference type="BioGRID-ORCS" id="51496">
    <property type="hits" value="94 hits in 1147 CRISPR screens"/>
</dbReference>
<dbReference type="CD-CODE" id="91857CE7">
    <property type="entry name" value="Nucleolus"/>
</dbReference>
<dbReference type="ChiTaRS" id="CTDSPL2">
    <property type="organism name" value="human"/>
</dbReference>
<dbReference type="GenomeRNAi" id="51496"/>
<dbReference type="Pharos" id="Q05D32">
    <property type="development level" value="Tbio"/>
</dbReference>
<dbReference type="PRO" id="PR:Q05D32"/>
<dbReference type="Proteomes" id="UP000005640">
    <property type="component" value="Chromosome 15"/>
</dbReference>
<dbReference type="RNAct" id="Q05D32">
    <property type="molecule type" value="protein"/>
</dbReference>
<dbReference type="Bgee" id="ENSG00000137770">
    <property type="expression patterns" value="Expressed in calcaneal tendon and 179 other cell types or tissues"/>
</dbReference>
<dbReference type="ExpressionAtlas" id="Q05D32">
    <property type="expression patterns" value="baseline and differential"/>
</dbReference>
<dbReference type="GO" id="GO:0005654">
    <property type="term" value="C:nucleoplasm"/>
    <property type="evidence" value="ECO:0000314"/>
    <property type="project" value="HPA"/>
</dbReference>
<dbReference type="GO" id="GO:0004721">
    <property type="term" value="F:phosphoprotein phosphatase activity"/>
    <property type="evidence" value="ECO:0000318"/>
    <property type="project" value="GO_Central"/>
</dbReference>
<dbReference type="GO" id="GO:0008420">
    <property type="term" value="F:RNA polymerase II CTD heptapeptide repeat phosphatase activity"/>
    <property type="evidence" value="ECO:0000314"/>
    <property type="project" value="CACAO"/>
</dbReference>
<dbReference type="GO" id="GO:0030514">
    <property type="term" value="P:negative regulation of BMP signaling pathway"/>
    <property type="evidence" value="ECO:0007669"/>
    <property type="project" value="Ensembl"/>
</dbReference>
<dbReference type="GO" id="GO:0046827">
    <property type="term" value="P:positive regulation of protein export from nucleus"/>
    <property type="evidence" value="ECO:0007669"/>
    <property type="project" value="Ensembl"/>
</dbReference>
<dbReference type="GO" id="GO:0006611">
    <property type="term" value="P:protein export from nucleus"/>
    <property type="evidence" value="ECO:0007669"/>
    <property type="project" value="Ensembl"/>
</dbReference>
<dbReference type="CDD" id="cd07521">
    <property type="entry name" value="HAD_FCP1-like"/>
    <property type="match status" value="1"/>
</dbReference>
<dbReference type="FunFam" id="3.40.50.1000:FF:000015">
    <property type="entry name" value="CTD small phosphatase-like protein 2"/>
    <property type="match status" value="1"/>
</dbReference>
<dbReference type="Gene3D" id="3.40.50.1000">
    <property type="entry name" value="HAD superfamily/HAD-like"/>
    <property type="match status" value="1"/>
</dbReference>
<dbReference type="InterPro" id="IPR011948">
    <property type="entry name" value="Dullard_phosphatase"/>
</dbReference>
<dbReference type="InterPro" id="IPR004274">
    <property type="entry name" value="FCP1_dom"/>
</dbReference>
<dbReference type="InterPro" id="IPR036412">
    <property type="entry name" value="HAD-like_sf"/>
</dbReference>
<dbReference type="InterPro" id="IPR023214">
    <property type="entry name" value="HAD_sf"/>
</dbReference>
<dbReference type="InterPro" id="IPR050365">
    <property type="entry name" value="TIM50"/>
</dbReference>
<dbReference type="NCBIfam" id="TIGR02251">
    <property type="entry name" value="HIF-SF_euk"/>
    <property type="match status" value="1"/>
</dbReference>
<dbReference type="PANTHER" id="PTHR12210">
    <property type="entry name" value="DULLARD PROTEIN PHOSPHATASE"/>
    <property type="match status" value="1"/>
</dbReference>
<dbReference type="Pfam" id="PF03031">
    <property type="entry name" value="NIF"/>
    <property type="match status" value="1"/>
</dbReference>
<dbReference type="SMART" id="SM00577">
    <property type="entry name" value="CPDc"/>
    <property type="match status" value="1"/>
</dbReference>
<dbReference type="SUPFAM" id="SSF56784">
    <property type="entry name" value="HAD-like"/>
    <property type="match status" value="1"/>
</dbReference>
<dbReference type="PROSITE" id="PS50969">
    <property type="entry name" value="FCP1"/>
    <property type="match status" value="1"/>
</dbReference>
<reference key="1">
    <citation type="journal article" date="2006" name="BMC Genomics">
        <title>NovelFam3000 -- uncharacterized human protein domains conserved across model organisms.</title>
        <authorList>
            <person name="Kemmer D."/>
            <person name="Podowski R.M."/>
            <person name="Arenillas D."/>
            <person name="Lim J."/>
            <person name="Hodges E."/>
            <person name="Roth P."/>
            <person name="Sonnhammer E.L.L."/>
            <person name="Hoeoeg C."/>
            <person name="Wasserman W.W."/>
        </authorList>
    </citation>
    <scope>NUCLEOTIDE SEQUENCE [MRNA] (ISOFORM 1)</scope>
</reference>
<reference key="2">
    <citation type="submission" date="2005-07" db="EMBL/GenBank/DDBJ databases">
        <authorList>
            <person name="Zhang J.W."/>
            <person name="Zhang X."/>
            <person name="Ma Y.N."/>
        </authorList>
    </citation>
    <scope>NUCLEOTIDE SEQUENCE [MRNA] (ISOFORM 1)</scope>
</reference>
<reference key="3">
    <citation type="journal article" date="2000" name="Genome Res.">
        <title>Cloning and functional analysis of cDNAs with open reading frames for 300 previously undefined genes expressed in CD34+ hematopoietic stem/progenitor cells.</title>
        <authorList>
            <person name="Zhang Q.-H."/>
            <person name="Ye M."/>
            <person name="Wu X.-Y."/>
            <person name="Ren S.-X."/>
            <person name="Zhao M."/>
            <person name="Zhao C.-J."/>
            <person name="Fu G."/>
            <person name="Shen Y."/>
            <person name="Fan H.-Y."/>
            <person name="Lu G."/>
            <person name="Zhong M."/>
            <person name="Xu X.-R."/>
            <person name="Han Z.-G."/>
            <person name="Zhang J.-W."/>
            <person name="Tao J."/>
            <person name="Huang Q.-H."/>
            <person name="Zhou J."/>
            <person name="Hu G.-X."/>
            <person name="Gu J."/>
            <person name="Chen S.-J."/>
            <person name="Chen Z."/>
        </authorList>
    </citation>
    <scope>NUCLEOTIDE SEQUENCE [LARGE SCALE MRNA] (ISOFORM 1)</scope>
    <source>
        <tissue>Umbilical cord blood</tissue>
    </source>
</reference>
<reference key="4">
    <citation type="journal article" date="2004" name="Nat. Genet.">
        <title>Complete sequencing and characterization of 21,243 full-length human cDNAs.</title>
        <authorList>
            <person name="Ota T."/>
            <person name="Suzuki Y."/>
            <person name="Nishikawa T."/>
            <person name="Otsuki T."/>
            <person name="Sugiyama T."/>
            <person name="Irie R."/>
            <person name="Wakamatsu A."/>
            <person name="Hayashi K."/>
            <person name="Sato H."/>
            <person name="Nagai K."/>
            <person name="Kimura K."/>
            <person name="Makita H."/>
            <person name="Sekine M."/>
            <person name="Obayashi M."/>
            <person name="Nishi T."/>
            <person name="Shibahara T."/>
            <person name="Tanaka T."/>
            <person name="Ishii S."/>
            <person name="Yamamoto J."/>
            <person name="Saito K."/>
            <person name="Kawai Y."/>
            <person name="Isono Y."/>
            <person name="Nakamura Y."/>
            <person name="Nagahari K."/>
            <person name="Murakami K."/>
            <person name="Yasuda T."/>
            <person name="Iwayanagi T."/>
            <person name="Wagatsuma M."/>
            <person name="Shiratori A."/>
            <person name="Sudo H."/>
            <person name="Hosoiri T."/>
            <person name="Kaku Y."/>
            <person name="Kodaira H."/>
            <person name="Kondo H."/>
            <person name="Sugawara M."/>
            <person name="Takahashi M."/>
            <person name="Kanda K."/>
            <person name="Yokoi T."/>
            <person name="Furuya T."/>
            <person name="Kikkawa E."/>
            <person name="Omura Y."/>
            <person name="Abe K."/>
            <person name="Kamihara K."/>
            <person name="Katsuta N."/>
            <person name="Sato K."/>
            <person name="Tanikawa M."/>
            <person name="Yamazaki M."/>
            <person name="Ninomiya K."/>
            <person name="Ishibashi T."/>
            <person name="Yamashita H."/>
            <person name="Murakawa K."/>
            <person name="Fujimori K."/>
            <person name="Tanai H."/>
            <person name="Kimata M."/>
            <person name="Watanabe M."/>
            <person name="Hiraoka S."/>
            <person name="Chiba Y."/>
            <person name="Ishida S."/>
            <person name="Ono Y."/>
            <person name="Takiguchi S."/>
            <person name="Watanabe S."/>
            <person name="Yosida M."/>
            <person name="Hotuta T."/>
            <person name="Kusano J."/>
            <person name="Kanehori K."/>
            <person name="Takahashi-Fujii A."/>
            <person name="Hara H."/>
            <person name="Tanase T.-O."/>
            <person name="Nomura Y."/>
            <person name="Togiya S."/>
            <person name="Komai F."/>
            <person name="Hara R."/>
            <person name="Takeuchi K."/>
            <person name="Arita M."/>
            <person name="Imose N."/>
            <person name="Musashino K."/>
            <person name="Yuuki H."/>
            <person name="Oshima A."/>
            <person name="Sasaki N."/>
            <person name="Aotsuka S."/>
            <person name="Yoshikawa Y."/>
            <person name="Matsunawa H."/>
            <person name="Ichihara T."/>
            <person name="Shiohata N."/>
            <person name="Sano S."/>
            <person name="Moriya S."/>
            <person name="Momiyama H."/>
            <person name="Satoh N."/>
            <person name="Takami S."/>
            <person name="Terashima Y."/>
            <person name="Suzuki O."/>
            <person name="Nakagawa S."/>
            <person name="Senoh A."/>
            <person name="Mizoguchi H."/>
            <person name="Goto Y."/>
            <person name="Shimizu F."/>
            <person name="Wakebe H."/>
            <person name="Hishigaki H."/>
            <person name="Watanabe T."/>
            <person name="Sugiyama A."/>
            <person name="Takemoto M."/>
            <person name="Kawakami B."/>
            <person name="Yamazaki M."/>
            <person name="Watanabe K."/>
            <person name="Kumagai A."/>
            <person name="Itakura S."/>
            <person name="Fukuzumi Y."/>
            <person name="Fujimori Y."/>
            <person name="Komiyama M."/>
            <person name="Tashiro H."/>
            <person name="Tanigami A."/>
            <person name="Fujiwara T."/>
            <person name="Ono T."/>
            <person name="Yamada K."/>
            <person name="Fujii Y."/>
            <person name="Ozaki K."/>
            <person name="Hirao M."/>
            <person name="Ohmori Y."/>
            <person name="Kawabata A."/>
            <person name="Hikiji T."/>
            <person name="Kobatake N."/>
            <person name="Inagaki H."/>
            <person name="Ikema Y."/>
            <person name="Okamoto S."/>
            <person name="Okitani R."/>
            <person name="Kawakami T."/>
            <person name="Noguchi S."/>
            <person name="Itoh T."/>
            <person name="Shigeta K."/>
            <person name="Senba T."/>
            <person name="Matsumura K."/>
            <person name="Nakajima Y."/>
            <person name="Mizuno T."/>
            <person name="Morinaga M."/>
            <person name="Sasaki M."/>
            <person name="Togashi T."/>
            <person name="Oyama M."/>
            <person name="Hata H."/>
            <person name="Watanabe M."/>
            <person name="Komatsu T."/>
            <person name="Mizushima-Sugano J."/>
            <person name="Satoh T."/>
            <person name="Shirai Y."/>
            <person name="Takahashi Y."/>
            <person name="Nakagawa K."/>
            <person name="Okumura K."/>
            <person name="Nagase T."/>
            <person name="Nomura N."/>
            <person name="Kikuchi H."/>
            <person name="Masuho Y."/>
            <person name="Yamashita R."/>
            <person name="Nakai K."/>
            <person name="Yada T."/>
            <person name="Nakamura Y."/>
            <person name="Ohara O."/>
            <person name="Isogai T."/>
            <person name="Sugano S."/>
        </authorList>
    </citation>
    <scope>NUCLEOTIDE SEQUENCE [LARGE SCALE MRNA] (ISOFORM 1)</scope>
    <source>
        <tissue>Teratocarcinoma</tissue>
    </source>
</reference>
<reference key="5">
    <citation type="journal article" date="2007" name="BMC Genomics">
        <title>The full-ORF clone resource of the German cDNA consortium.</title>
        <authorList>
            <person name="Bechtel S."/>
            <person name="Rosenfelder H."/>
            <person name="Duda A."/>
            <person name="Schmidt C.P."/>
            <person name="Ernst U."/>
            <person name="Wellenreuther R."/>
            <person name="Mehrle A."/>
            <person name="Schuster C."/>
            <person name="Bahr A."/>
            <person name="Bloecker H."/>
            <person name="Heubner D."/>
            <person name="Hoerlein A."/>
            <person name="Michel G."/>
            <person name="Wedler H."/>
            <person name="Koehrer K."/>
            <person name="Ottenwaelder B."/>
            <person name="Poustka A."/>
            <person name="Wiemann S."/>
            <person name="Schupp I."/>
        </authorList>
    </citation>
    <scope>NUCLEOTIDE SEQUENCE [LARGE SCALE MRNA] (ISOFORM 2)</scope>
    <source>
        <tissue>Bone marrow</tissue>
    </source>
</reference>
<reference key="6">
    <citation type="submission" date="2005-07" db="EMBL/GenBank/DDBJ databases">
        <authorList>
            <person name="Mural R.J."/>
            <person name="Istrail S."/>
            <person name="Sutton G.G."/>
            <person name="Florea L."/>
            <person name="Halpern A.L."/>
            <person name="Mobarry C.M."/>
            <person name="Lippert R."/>
            <person name="Walenz B."/>
            <person name="Shatkay H."/>
            <person name="Dew I."/>
            <person name="Miller J.R."/>
            <person name="Flanigan M.J."/>
            <person name="Edwards N.J."/>
            <person name="Bolanos R."/>
            <person name="Fasulo D."/>
            <person name="Halldorsson B.V."/>
            <person name="Hannenhalli S."/>
            <person name="Turner R."/>
            <person name="Yooseph S."/>
            <person name="Lu F."/>
            <person name="Nusskern D.R."/>
            <person name="Shue B.C."/>
            <person name="Zheng X.H."/>
            <person name="Zhong F."/>
            <person name="Delcher A.L."/>
            <person name="Huson D.H."/>
            <person name="Kravitz S.A."/>
            <person name="Mouchard L."/>
            <person name="Reinert K."/>
            <person name="Remington K.A."/>
            <person name="Clark A.G."/>
            <person name="Waterman M.S."/>
            <person name="Eichler E.E."/>
            <person name="Adams M.D."/>
            <person name="Hunkapiller M.W."/>
            <person name="Myers E.W."/>
            <person name="Venter J.C."/>
        </authorList>
    </citation>
    <scope>NUCLEOTIDE SEQUENCE [LARGE SCALE GENOMIC DNA]</scope>
</reference>
<reference key="7">
    <citation type="journal article" date="2004" name="Genome Res.">
        <title>The status, quality, and expansion of the NIH full-length cDNA project: the Mammalian Gene Collection (MGC).</title>
        <authorList>
            <consortium name="The MGC Project Team"/>
        </authorList>
    </citation>
    <scope>NUCLEOTIDE SEQUENCE [LARGE SCALE MRNA] (ISOFORM 1)</scope>
    <source>
        <tissue>Brain</tissue>
    </source>
</reference>
<reference key="8">
    <citation type="journal article" date="2006" name="Cell">
        <title>Global, in vivo, and site-specific phosphorylation dynamics in signaling networks.</title>
        <authorList>
            <person name="Olsen J.V."/>
            <person name="Blagoev B."/>
            <person name="Gnad F."/>
            <person name="Macek B."/>
            <person name="Kumar C."/>
            <person name="Mortensen P."/>
            <person name="Mann M."/>
        </authorList>
    </citation>
    <scope>PHOSPHORYLATION [LARGE SCALE ANALYSIS] AT SER-104</scope>
    <scope>IDENTIFICATION BY MASS SPECTROMETRY [LARGE SCALE ANALYSIS]</scope>
    <source>
        <tissue>Cervix carcinoma</tissue>
    </source>
</reference>
<reference key="9">
    <citation type="journal article" date="2008" name="Mol. Cell">
        <title>Kinase-selective enrichment enables quantitative phosphoproteomics of the kinome across the cell cycle.</title>
        <authorList>
            <person name="Daub H."/>
            <person name="Olsen J.V."/>
            <person name="Bairlein M."/>
            <person name="Gnad F."/>
            <person name="Oppermann F.S."/>
            <person name="Korner R."/>
            <person name="Greff Z."/>
            <person name="Keri G."/>
            <person name="Stemmann O."/>
            <person name="Mann M."/>
        </authorList>
    </citation>
    <scope>IDENTIFICATION BY MASS SPECTROMETRY [LARGE SCALE ANALYSIS]</scope>
    <source>
        <tissue>Cervix carcinoma</tissue>
    </source>
</reference>
<reference key="10">
    <citation type="journal article" date="2008" name="Proc. Natl. Acad. Sci. U.S.A.">
        <title>A quantitative atlas of mitotic phosphorylation.</title>
        <authorList>
            <person name="Dephoure N."/>
            <person name="Zhou C."/>
            <person name="Villen J."/>
            <person name="Beausoleil S.A."/>
            <person name="Bakalarski C.E."/>
            <person name="Elledge S.J."/>
            <person name="Gygi S.P."/>
        </authorList>
    </citation>
    <scope>PHOSPHORYLATION [LARGE SCALE ANALYSIS] AT SER-85; THR-86; SER-104 AND SER-165</scope>
    <scope>IDENTIFICATION BY MASS SPECTROMETRY [LARGE SCALE ANALYSIS]</scope>
    <source>
        <tissue>Cervix carcinoma</tissue>
    </source>
</reference>
<reference key="11">
    <citation type="journal article" date="2009" name="Anal. Chem.">
        <title>Lys-N and trypsin cover complementary parts of the phosphoproteome in a refined SCX-based approach.</title>
        <authorList>
            <person name="Gauci S."/>
            <person name="Helbig A.O."/>
            <person name="Slijper M."/>
            <person name="Krijgsveld J."/>
            <person name="Heck A.J."/>
            <person name="Mohammed S."/>
        </authorList>
    </citation>
    <scope>IDENTIFICATION BY MASS SPECTROMETRY [LARGE SCALE ANALYSIS]</scope>
</reference>
<reference key="12">
    <citation type="journal article" date="2009" name="Sci. Signal.">
        <title>Quantitative phosphoproteomic analysis of T cell receptor signaling reveals system-wide modulation of protein-protein interactions.</title>
        <authorList>
            <person name="Mayya V."/>
            <person name="Lundgren D.H."/>
            <person name="Hwang S.-I."/>
            <person name="Rezaul K."/>
            <person name="Wu L."/>
            <person name="Eng J.K."/>
            <person name="Rodionov V."/>
            <person name="Han D.K."/>
        </authorList>
    </citation>
    <scope>PHOSPHORYLATION [LARGE SCALE ANALYSIS] AT THR-86; SER-134 AND SER-165</scope>
    <scope>IDENTIFICATION BY MASS SPECTROMETRY [LARGE SCALE ANALYSIS]</scope>
    <source>
        <tissue>Leukemic T-cell</tissue>
    </source>
</reference>
<reference key="13">
    <citation type="journal article" date="2009" name="Science">
        <title>Lysine acetylation targets protein complexes and co-regulates major cellular functions.</title>
        <authorList>
            <person name="Choudhary C."/>
            <person name="Kumar C."/>
            <person name="Gnad F."/>
            <person name="Nielsen M.L."/>
            <person name="Rehman M."/>
            <person name="Walther T.C."/>
            <person name="Olsen J.V."/>
            <person name="Mann M."/>
        </authorList>
    </citation>
    <scope>ACETYLATION [LARGE SCALE ANALYSIS] AT LYS-26 AND LYS-57</scope>
    <scope>IDENTIFICATION BY MASS SPECTROMETRY [LARGE SCALE ANALYSIS]</scope>
</reference>
<reference key="14">
    <citation type="journal article" date="2010" name="Sci. Signal.">
        <title>Quantitative phosphoproteomics reveals widespread full phosphorylation site occupancy during mitosis.</title>
        <authorList>
            <person name="Olsen J.V."/>
            <person name="Vermeulen M."/>
            <person name="Santamaria A."/>
            <person name="Kumar C."/>
            <person name="Miller M.L."/>
            <person name="Jensen L.J."/>
            <person name="Gnad F."/>
            <person name="Cox J."/>
            <person name="Jensen T.S."/>
            <person name="Nigg E.A."/>
            <person name="Brunak S."/>
            <person name="Mann M."/>
        </authorList>
    </citation>
    <scope>PHOSPHORYLATION [LARGE SCALE ANALYSIS] AT THR-86; SER-104; SER-134 AND SER-165</scope>
    <scope>IDENTIFICATION BY MASS SPECTROMETRY [LARGE SCALE ANALYSIS]</scope>
    <source>
        <tissue>Cervix carcinoma</tissue>
    </source>
</reference>
<reference key="15">
    <citation type="journal article" date="2011" name="Sci. Signal.">
        <title>System-wide temporal characterization of the proteome and phosphoproteome of human embryonic stem cell differentiation.</title>
        <authorList>
            <person name="Rigbolt K.T."/>
            <person name="Prokhorova T.A."/>
            <person name="Akimov V."/>
            <person name="Henningsen J."/>
            <person name="Johansen P.T."/>
            <person name="Kratchmarova I."/>
            <person name="Kassem M."/>
            <person name="Mann M."/>
            <person name="Olsen J.V."/>
            <person name="Blagoev B."/>
        </authorList>
    </citation>
    <scope>PHOSPHORYLATION [LARGE SCALE ANALYSIS] AT SER-104 AND SER-165</scope>
    <scope>IDENTIFICATION BY MASS SPECTROMETRY [LARGE SCALE ANALYSIS]</scope>
</reference>
<reference key="16">
    <citation type="journal article" date="2013" name="J. Proteome Res.">
        <title>Toward a comprehensive characterization of a human cancer cell phosphoproteome.</title>
        <authorList>
            <person name="Zhou H."/>
            <person name="Di Palma S."/>
            <person name="Preisinger C."/>
            <person name="Peng M."/>
            <person name="Polat A.N."/>
            <person name="Heck A.J."/>
            <person name="Mohammed S."/>
        </authorList>
    </citation>
    <scope>PHOSPHORYLATION [LARGE SCALE ANALYSIS] AT SER-28; SER-51; THR-86; SER-104; SER-134 AND SER-165</scope>
    <scope>IDENTIFICATION BY MASS SPECTROMETRY [LARGE SCALE ANALYSIS]</scope>
    <source>
        <tissue>Cervix carcinoma</tissue>
        <tissue>Erythroleukemia</tissue>
    </source>
</reference>
<reference key="17">
    <citation type="journal article" date="2014" name="J. Proteomics">
        <title>An enzyme assisted RP-RPLC approach for in-depth analysis of human liver phosphoproteome.</title>
        <authorList>
            <person name="Bian Y."/>
            <person name="Song C."/>
            <person name="Cheng K."/>
            <person name="Dong M."/>
            <person name="Wang F."/>
            <person name="Huang J."/>
            <person name="Sun D."/>
            <person name="Wang L."/>
            <person name="Ye M."/>
            <person name="Zou H."/>
        </authorList>
    </citation>
    <scope>IDENTIFICATION BY MASS SPECTROMETRY [LARGE SCALE ANALYSIS]</scope>
    <source>
        <tissue>Liver</tissue>
    </source>
</reference>
<feature type="chain" id="PRO_0000331464" description="CTD small phosphatase-like protein 2">
    <location>
        <begin position="1"/>
        <end position="466"/>
    </location>
</feature>
<feature type="domain" description="FCP1 homology" evidence="2">
    <location>
        <begin position="283"/>
        <end position="442"/>
    </location>
</feature>
<feature type="region of interest" description="Disordered" evidence="3">
    <location>
        <begin position="1"/>
        <end position="140"/>
    </location>
</feature>
<feature type="region of interest" description="Disordered" evidence="3">
    <location>
        <begin position="220"/>
        <end position="240"/>
    </location>
</feature>
<feature type="compositionally biased region" description="Polar residues" evidence="3">
    <location>
        <begin position="8"/>
        <end position="20"/>
    </location>
</feature>
<feature type="compositionally biased region" description="Basic and acidic residues" evidence="3">
    <location>
        <begin position="60"/>
        <end position="79"/>
    </location>
</feature>
<feature type="compositionally biased region" description="Polar residues" evidence="3">
    <location>
        <begin position="129"/>
        <end position="140"/>
    </location>
</feature>
<feature type="modified residue" description="N6-acetyllysine" evidence="8">
    <location>
        <position position="26"/>
    </location>
</feature>
<feature type="modified residue" description="Phosphoserine" evidence="12">
    <location>
        <position position="28"/>
    </location>
</feature>
<feature type="modified residue" description="Phosphoserine" evidence="12">
    <location>
        <position position="51"/>
    </location>
</feature>
<feature type="modified residue" description="N6-acetyllysine" evidence="8">
    <location>
        <position position="57"/>
    </location>
</feature>
<feature type="modified residue" description="Phosphoserine" evidence="7">
    <location>
        <position position="85"/>
    </location>
</feature>
<feature type="modified residue" description="Phosphothreonine" evidence="7 9 10 12">
    <location>
        <position position="86"/>
    </location>
</feature>
<feature type="modified residue" description="Phosphoserine" evidence="6 7 10 11 12">
    <location>
        <position position="104"/>
    </location>
</feature>
<feature type="modified residue" description="Phosphoserine" evidence="9 10 12">
    <location>
        <position position="134"/>
    </location>
</feature>
<feature type="modified residue" description="Phosphoserine" evidence="7 9 10 11 12">
    <location>
        <position position="165"/>
    </location>
</feature>
<feature type="splice variant" id="VSP_033218" description="In isoform 2." evidence="4">
    <location>
        <begin position="159"/>
        <end position="230"/>
    </location>
</feature>
<feature type="sequence variant" id="VAR_042886" description="In dbSNP:rs871923.">
    <original>A</original>
    <variation>V</variation>
    <location>
        <position position="244"/>
    </location>
</feature>
<feature type="sequence conflict" description="In Ref. 3; AAF29093." evidence="5" ref="3">
    <original>NGEA</original>
    <variation>MEKL</variation>
    <location>
        <begin position="107"/>
        <end position="110"/>
    </location>
</feature>
<feature type="sequence conflict" description="In Ref. 3; AAF29030." evidence="5" ref="3">
    <original>P</original>
    <variation>T</variation>
    <location>
        <position position="228"/>
    </location>
</feature>
<feature type="sequence conflict" description="In Ref. 1; AAQ76796 and 4; BAA91664." evidence="5" ref="1 4">
    <original>I</original>
    <variation>V</variation>
    <location>
        <position position="321"/>
    </location>
</feature>
<evidence type="ECO:0000250" key="1"/>
<evidence type="ECO:0000255" key="2">
    <source>
        <dbReference type="PROSITE-ProRule" id="PRU00336"/>
    </source>
</evidence>
<evidence type="ECO:0000256" key="3">
    <source>
        <dbReference type="SAM" id="MobiDB-lite"/>
    </source>
</evidence>
<evidence type="ECO:0000303" key="4">
    <source>
    </source>
</evidence>
<evidence type="ECO:0000305" key="5"/>
<evidence type="ECO:0007744" key="6">
    <source>
    </source>
</evidence>
<evidence type="ECO:0007744" key="7">
    <source>
    </source>
</evidence>
<evidence type="ECO:0007744" key="8">
    <source>
    </source>
</evidence>
<evidence type="ECO:0007744" key="9">
    <source>
    </source>
</evidence>
<evidence type="ECO:0007744" key="10">
    <source>
    </source>
</evidence>
<evidence type="ECO:0007744" key="11">
    <source>
    </source>
</evidence>
<evidence type="ECO:0007744" key="12">
    <source>
    </source>
</evidence>
<sequence>MRLRTRKASQQSNQIQTQRTARAKRKYSEVDDSLPSGGEKPSKNETGLLSSIKKFIKGSTPKEERENPSKRSRIERDIDNNLITSTPRAGEKPNKQISRVRRKSQVNGEAGSYEMTNQHVKQNGKLEDNPSSGSPPRTTLLGTIFSPVFNFFSPANKNGTSGSDSPGQAVEAEEIVKQLDMEQVDEITTSTTTSTNGAAYSNQAVQVRPSLNNGLEEAEETVNRDIPPLTAPVTPDSGYSSAHAEATYEEDWEVFDPYYFIKHVPPLTEEQLNRKPALPLKTRSTPEFSLVLDLDETLVHCSLNELEDAALTFPVLFQDVIYQVYVRLRPFFREFLERMSQMYEIILFTASKKVYADKLLNILDPKKQLVRHRLFREHCVCVQGNYIKDLNILGRDLSKTIIIDNSPQAFAYQLSNGIPIESWFMDKNDNELLKLIPFLEKLVELNEDVRPHIRDRFRLHDLLPPD</sequence>
<gene>
    <name type="primary">CTDSPL2</name>
    <name type="ORF">HSPC058</name>
    <name type="ORF">HSPC129</name>
</gene>
<accession>Q05D32</accession>
<accession>Q3ZTU1</accession>
<accession>Q6AI06</accession>
<accession>Q8IYI9</accession>
<accession>Q9NVT2</accession>
<accession>Q9NZX8</accession>
<accession>Q9P030</accession>
<proteinExistence type="evidence at protein level"/>